<feature type="chain" id="PRO_0000109156" description="UDP-N-acetylglucosamine--N-acetylmuramyl-(pentapeptide) pyrophosphoryl-undecaprenol N-acetylglucosamine transferase">
    <location>
        <begin position="1"/>
        <end position="342"/>
    </location>
</feature>
<feature type="binding site" evidence="1">
    <location>
        <begin position="10"/>
        <end position="12"/>
    </location>
    <ligand>
        <name>UDP-N-acetyl-alpha-D-glucosamine</name>
        <dbReference type="ChEBI" id="CHEBI:57705"/>
    </ligand>
</feature>
<feature type="binding site" evidence="1">
    <location>
        <position position="124"/>
    </location>
    <ligand>
        <name>UDP-N-acetyl-alpha-D-glucosamine</name>
        <dbReference type="ChEBI" id="CHEBI:57705"/>
    </ligand>
</feature>
<feature type="binding site" evidence="1">
    <location>
        <position position="177"/>
    </location>
    <ligand>
        <name>UDP-N-acetyl-alpha-D-glucosamine</name>
        <dbReference type="ChEBI" id="CHEBI:57705"/>
    </ligand>
</feature>
<feature type="binding site" evidence="1">
    <location>
        <position position="275"/>
    </location>
    <ligand>
        <name>UDP-N-acetyl-alpha-D-glucosamine</name>
        <dbReference type="ChEBI" id="CHEBI:57705"/>
    </ligand>
</feature>
<dbReference type="EC" id="2.4.1.227" evidence="1"/>
<dbReference type="EMBL" id="AL111168">
    <property type="protein sequence ID" value="CAL35157.1"/>
    <property type="molecule type" value="Genomic_DNA"/>
</dbReference>
<dbReference type="PIR" id="D81306">
    <property type="entry name" value="D81306"/>
</dbReference>
<dbReference type="RefSeq" id="WP_002856115.1">
    <property type="nucleotide sequence ID" value="NZ_SZUC01000001.1"/>
</dbReference>
<dbReference type="RefSeq" id="YP_002344434.1">
    <property type="nucleotide sequence ID" value="NC_002163.1"/>
</dbReference>
<dbReference type="SMR" id="Q9PNQ2"/>
<dbReference type="IntAct" id="Q9PNQ2">
    <property type="interactions" value="7"/>
</dbReference>
<dbReference type="STRING" id="192222.Cj1039"/>
<dbReference type="CAZy" id="GT28">
    <property type="family name" value="Glycosyltransferase Family 28"/>
</dbReference>
<dbReference type="PaxDb" id="192222-Cj1039"/>
<dbReference type="EnsemblBacteria" id="CAL35157">
    <property type="protein sequence ID" value="CAL35157"/>
    <property type="gene ID" value="Cj1039"/>
</dbReference>
<dbReference type="GeneID" id="905331"/>
<dbReference type="KEGG" id="cje:Cj1039"/>
<dbReference type="PATRIC" id="fig|192222.6.peg.1021"/>
<dbReference type="eggNOG" id="COG0707">
    <property type="taxonomic scope" value="Bacteria"/>
</dbReference>
<dbReference type="HOGENOM" id="CLU_037404_2_1_7"/>
<dbReference type="OrthoDB" id="9808936at2"/>
<dbReference type="UniPathway" id="UPA00219"/>
<dbReference type="Proteomes" id="UP000000799">
    <property type="component" value="Chromosome"/>
</dbReference>
<dbReference type="GO" id="GO:0005886">
    <property type="term" value="C:plasma membrane"/>
    <property type="evidence" value="ECO:0007669"/>
    <property type="project" value="UniProtKB-SubCell"/>
</dbReference>
<dbReference type="GO" id="GO:0051991">
    <property type="term" value="F:UDP-N-acetyl-D-glucosamine:N-acetylmuramoyl-L-alanyl-D-glutamyl-meso-2,6-diaminopimelyl-D-alanyl-D-alanine-diphosphoundecaprenol 4-beta-N-acetylglucosaminlytransferase activity"/>
    <property type="evidence" value="ECO:0007669"/>
    <property type="project" value="RHEA"/>
</dbReference>
<dbReference type="GO" id="GO:0050511">
    <property type="term" value="F:undecaprenyldiphospho-muramoylpentapeptide beta-N-acetylglucosaminyltransferase activity"/>
    <property type="evidence" value="ECO:0007669"/>
    <property type="project" value="UniProtKB-UniRule"/>
</dbReference>
<dbReference type="GO" id="GO:0005975">
    <property type="term" value="P:carbohydrate metabolic process"/>
    <property type="evidence" value="ECO:0007669"/>
    <property type="project" value="InterPro"/>
</dbReference>
<dbReference type="GO" id="GO:0051301">
    <property type="term" value="P:cell division"/>
    <property type="evidence" value="ECO:0007669"/>
    <property type="project" value="UniProtKB-KW"/>
</dbReference>
<dbReference type="GO" id="GO:0071555">
    <property type="term" value="P:cell wall organization"/>
    <property type="evidence" value="ECO:0007669"/>
    <property type="project" value="UniProtKB-KW"/>
</dbReference>
<dbReference type="GO" id="GO:0030259">
    <property type="term" value="P:lipid glycosylation"/>
    <property type="evidence" value="ECO:0007669"/>
    <property type="project" value="UniProtKB-UniRule"/>
</dbReference>
<dbReference type="GO" id="GO:0009252">
    <property type="term" value="P:peptidoglycan biosynthetic process"/>
    <property type="evidence" value="ECO:0007669"/>
    <property type="project" value="UniProtKB-UniRule"/>
</dbReference>
<dbReference type="GO" id="GO:0008360">
    <property type="term" value="P:regulation of cell shape"/>
    <property type="evidence" value="ECO:0007669"/>
    <property type="project" value="UniProtKB-KW"/>
</dbReference>
<dbReference type="CDD" id="cd03785">
    <property type="entry name" value="GT28_MurG"/>
    <property type="match status" value="1"/>
</dbReference>
<dbReference type="Gene3D" id="3.40.50.2000">
    <property type="entry name" value="Glycogen Phosphorylase B"/>
    <property type="match status" value="2"/>
</dbReference>
<dbReference type="HAMAP" id="MF_00033">
    <property type="entry name" value="MurG"/>
    <property type="match status" value="1"/>
</dbReference>
<dbReference type="InterPro" id="IPR006009">
    <property type="entry name" value="GlcNAc_MurG"/>
</dbReference>
<dbReference type="InterPro" id="IPR007235">
    <property type="entry name" value="Glyco_trans_28_C"/>
</dbReference>
<dbReference type="InterPro" id="IPR004276">
    <property type="entry name" value="GlycoTrans_28_N"/>
</dbReference>
<dbReference type="NCBIfam" id="TIGR01133">
    <property type="entry name" value="murG"/>
    <property type="match status" value="1"/>
</dbReference>
<dbReference type="PANTHER" id="PTHR21015:SF22">
    <property type="entry name" value="GLYCOSYLTRANSFERASE"/>
    <property type="match status" value="1"/>
</dbReference>
<dbReference type="PANTHER" id="PTHR21015">
    <property type="entry name" value="UDP-N-ACETYLGLUCOSAMINE--N-ACETYLMURAMYL-(PENTAPEPTIDE) PYROPHOSPHORYL-UNDECAPRENOL N-ACETYLGLUCOSAMINE TRANSFERASE 1"/>
    <property type="match status" value="1"/>
</dbReference>
<dbReference type="Pfam" id="PF04101">
    <property type="entry name" value="Glyco_tran_28_C"/>
    <property type="match status" value="1"/>
</dbReference>
<dbReference type="Pfam" id="PF03033">
    <property type="entry name" value="Glyco_transf_28"/>
    <property type="match status" value="1"/>
</dbReference>
<dbReference type="SUPFAM" id="SSF53756">
    <property type="entry name" value="UDP-Glycosyltransferase/glycogen phosphorylase"/>
    <property type="match status" value="1"/>
</dbReference>
<reference key="1">
    <citation type="journal article" date="2000" name="Nature">
        <title>The genome sequence of the food-borne pathogen Campylobacter jejuni reveals hypervariable sequences.</title>
        <authorList>
            <person name="Parkhill J."/>
            <person name="Wren B.W."/>
            <person name="Mungall K.L."/>
            <person name="Ketley J.M."/>
            <person name="Churcher C.M."/>
            <person name="Basham D."/>
            <person name="Chillingworth T."/>
            <person name="Davies R.M."/>
            <person name="Feltwell T."/>
            <person name="Holroyd S."/>
            <person name="Jagels K."/>
            <person name="Karlyshev A.V."/>
            <person name="Moule S."/>
            <person name="Pallen M.J."/>
            <person name="Penn C.W."/>
            <person name="Quail M.A."/>
            <person name="Rajandream M.A."/>
            <person name="Rutherford K.M."/>
            <person name="van Vliet A.H.M."/>
            <person name="Whitehead S."/>
            <person name="Barrell B.G."/>
        </authorList>
    </citation>
    <scope>NUCLEOTIDE SEQUENCE [LARGE SCALE GENOMIC DNA]</scope>
    <source>
        <strain>ATCC 700819 / NCTC 11168</strain>
    </source>
</reference>
<organism>
    <name type="scientific">Campylobacter jejuni subsp. jejuni serotype O:2 (strain ATCC 700819 / NCTC 11168)</name>
    <dbReference type="NCBI Taxonomy" id="192222"/>
    <lineage>
        <taxon>Bacteria</taxon>
        <taxon>Pseudomonadati</taxon>
        <taxon>Campylobacterota</taxon>
        <taxon>Epsilonproteobacteria</taxon>
        <taxon>Campylobacterales</taxon>
        <taxon>Campylobacteraceae</taxon>
        <taxon>Campylobacter</taxon>
    </lineage>
</organism>
<accession>Q9PNQ2</accession>
<accession>Q0P9L3</accession>
<name>MURG_CAMJE</name>
<comment type="function">
    <text evidence="1">Cell wall formation. Catalyzes the transfer of a GlcNAc subunit on undecaprenyl-pyrophosphoryl-MurNAc-pentapeptide (lipid intermediate I) to form undecaprenyl-pyrophosphoryl-MurNAc-(pentapeptide)GlcNAc (lipid intermediate II).</text>
</comment>
<comment type="catalytic activity">
    <reaction evidence="1">
        <text>di-trans,octa-cis-undecaprenyl diphospho-N-acetyl-alpha-D-muramoyl-L-alanyl-D-glutamyl-meso-2,6-diaminopimeloyl-D-alanyl-D-alanine + UDP-N-acetyl-alpha-D-glucosamine = di-trans,octa-cis-undecaprenyl diphospho-[N-acetyl-alpha-D-glucosaminyl-(1-&gt;4)]-N-acetyl-alpha-D-muramoyl-L-alanyl-D-glutamyl-meso-2,6-diaminopimeloyl-D-alanyl-D-alanine + UDP + H(+)</text>
        <dbReference type="Rhea" id="RHEA:31227"/>
        <dbReference type="ChEBI" id="CHEBI:15378"/>
        <dbReference type="ChEBI" id="CHEBI:57705"/>
        <dbReference type="ChEBI" id="CHEBI:58223"/>
        <dbReference type="ChEBI" id="CHEBI:61387"/>
        <dbReference type="ChEBI" id="CHEBI:61388"/>
        <dbReference type="EC" id="2.4.1.227"/>
    </reaction>
</comment>
<comment type="pathway">
    <text evidence="1">Cell wall biogenesis; peptidoglycan biosynthesis.</text>
</comment>
<comment type="subcellular location">
    <subcellularLocation>
        <location evidence="1">Cell inner membrane</location>
        <topology evidence="1">Peripheral membrane protein</topology>
        <orientation evidence="1">Cytoplasmic side</orientation>
    </subcellularLocation>
</comment>
<comment type="similarity">
    <text evidence="1">Belongs to the glycosyltransferase 28 family. MurG subfamily.</text>
</comment>
<proteinExistence type="inferred from homology"/>
<protein>
    <recommendedName>
        <fullName evidence="1">UDP-N-acetylglucosamine--N-acetylmuramyl-(pentapeptide) pyrophosphoryl-undecaprenol N-acetylglucosamine transferase</fullName>
        <ecNumber evidence="1">2.4.1.227</ecNumber>
    </recommendedName>
    <alternativeName>
        <fullName evidence="1">Undecaprenyl-PP-MurNAc-pentapeptide-UDPGlcNAc GlcNAc transferase</fullName>
    </alternativeName>
</protein>
<gene>
    <name evidence="1" type="primary">murG</name>
    <name type="ordered locus">Cj1039</name>
</gene>
<keyword id="KW-0131">Cell cycle</keyword>
<keyword id="KW-0132">Cell division</keyword>
<keyword id="KW-0997">Cell inner membrane</keyword>
<keyword id="KW-1003">Cell membrane</keyword>
<keyword id="KW-0133">Cell shape</keyword>
<keyword id="KW-0961">Cell wall biogenesis/degradation</keyword>
<keyword id="KW-0328">Glycosyltransferase</keyword>
<keyword id="KW-0472">Membrane</keyword>
<keyword id="KW-0573">Peptidoglycan synthesis</keyword>
<keyword id="KW-1185">Reference proteome</keyword>
<keyword id="KW-0808">Transferase</keyword>
<evidence type="ECO:0000255" key="1">
    <source>
        <dbReference type="HAMAP-Rule" id="MF_00033"/>
    </source>
</evidence>
<sequence>MTIALTGGGTGGHLAIVRCLLESAIKKNIECVYIGSQNGQDKAWFENEVRFKEKFFLSSKGVVNQSKFDKISSLLHTLKLSKDCREIFKKYHIQAVFSVGGYSAAPASFAALFSHLPLFIHEQNSKSGSLNMLLKPFATKFFSAFEKEISPYPVADKFFDNARIRKELKNIIFLGGSQGAQFINELALNLAPKLQEQNIKIIHQCGKNDFEKCKKHYQSLNIQADIFDFSLNLEEKMKNADLAISRAGASTLFELCANTLPTIFIPYPYAAKNHQYFNAKFLQDQALCQIFMQNSINLDEFFKSILKLNLENISTRLQNITQKNGADMLIQKALFDNLTFIR</sequence>